<sequence length="101" mass="10872">MVGLEHYLTVSAALLVIGIFGIFLNRKNVIVILMSIELMLLAVNINLVAFSSFLGDLTGQVFTLFVLTVAAAEAAIGLAILVTFFRNRGTIDVEDVNVMKG</sequence>
<organism>
    <name type="scientific">Cereibacter sphaeroides (strain ATCC 17025 / ATH 2.4.3)</name>
    <name type="common">Rhodobacter sphaeroides</name>
    <dbReference type="NCBI Taxonomy" id="349102"/>
    <lineage>
        <taxon>Bacteria</taxon>
        <taxon>Pseudomonadati</taxon>
        <taxon>Pseudomonadota</taxon>
        <taxon>Alphaproteobacteria</taxon>
        <taxon>Rhodobacterales</taxon>
        <taxon>Paracoccaceae</taxon>
        <taxon>Cereibacter</taxon>
    </lineage>
</organism>
<comment type="function">
    <text evidence="1">NDH-1 shuttles electrons from NADH, via FMN and iron-sulfur (Fe-S) centers, to quinones in the respiratory chain. The immediate electron acceptor for the enzyme in this species is believed to be ubiquinone. Couples the redox reaction to proton translocation (for every two electrons transferred, four hydrogen ions are translocated across the cytoplasmic membrane), and thus conserves the redox energy in a proton gradient.</text>
</comment>
<comment type="catalytic activity">
    <reaction evidence="1">
        <text>a quinone + NADH + 5 H(+)(in) = a quinol + NAD(+) + 4 H(+)(out)</text>
        <dbReference type="Rhea" id="RHEA:57888"/>
        <dbReference type="ChEBI" id="CHEBI:15378"/>
        <dbReference type="ChEBI" id="CHEBI:24646"/>
        <dbReference type="ChEBI" id="CHEBI:57540"/>
        <dbReference type="ChEBI" id="CHEBI:57945"/>
        <dbReference type="ChEBI" id="CHEBI:132124"/>
    </reaction>
</comment>
<comment type="subunit">
    <text evidence="1">NDH-1 is composed of 14 different subunits. Subunits NuoA, H, J, K, L, M, N constitute the membrane sector of the complex.</text>
</comment>
<comment type="subcellular location">
    <subcellularLocation>
        <location evidence="1">Cell inner membrane</location>
        <topology evidence="1">Multi-pass membrane protein</topology>
    </subcellularLocation>
</comment>
<comment type="similarity">
    <text evidence="1">Belongs to the complex I subunit 4L family.</text>
</comment>
<dbReference type="EC" id="7.1.1.-" evidence="1"/>
<dbReference type="EMBL" id="CP000661">
    <property type="protein sequence ID" value="ABP70885.1"/>
    <property type="molecule type" value="Genomic_DNA"/>
</dbReference>
<dbReference type="SMR" id="A4WU21"/>
<dbReference type="STRING" id="349102.Rsph17025_1994"/>
<dbReference type="KEGG" id="rsq:Rsph17025_1994"/>
<dbReference type="eggNOG" id="COG0713">
    <property type="taxonomic scope" value="Bacteria"/>
</dbReference>
<dbReference type="HOGENOM" id="CLU_144724_2_0_5"/>
<dbReference type="BioCyc" id="RSPH349102:G1G8M-2060-MONOMER"/>
<dbReference type="GO" id="GO:0030964">
    <property type="term" value="C:NADH dehydrogenase complex"/>
    <property type="evidence" value="ECO:0007669"/>
    <property type="project" value="TreeGrafter"/>
</dbReference>
<dbReference type="GO" id="GO:0005886">
    <property type="term" value="C:plasma membrane"/>
    <property type="evidence" value="ECO:0007669"/>
    <property type="project" value="UniProtKB-SubCell"/>
</dbReference>
<dbReference type="GO" id="GO:0050136">
    <property type="term" value="F:NADH:ubiquinone reductase (non-electrogenic) activity"/>
    <property type="evidence" value="ECO:0007669"/>
    <property type="project" value="UniProtKB-UniRule"/>
</dbReference>
<dbReference type="GO" id="GO:0048038">
    <property type="term" value="F:quinone binding"/>
    <property type="evidence" value="ECO:0007669"/>
    <property type="project" value="UniProtKB-KW"/>
</dbReference>
<dbReference type="GO" id="GO:0042773">
    <property type="term" value="P:ATP synthesis coupled electron transport"/>
    <property type="evidence" value="ECO:0007669"/>
    <property type="project" value="InterPro"/>
</dbReference>
<dbReference type="FunFam" id="1.10.287.3510:FF:000001">
    <property type="entry name" value="NADH-quinone oxidoreductase subunit K"/>
    <property type="match status" value="1"/>
</dbReference>
<dbReference type="Gene3D" id="1.10.287.3510">
    <property type="match status" value="1"/>
</dbReference>
<dbReference type="HAMAP" id="MF_01456">
    <property type="entry name" value="NDH1_NuoK"/>
    <property type="match status" value="1"/>
</dbReference>
<dbReference type="InterPro" id="IPR001133">
    <property type="entry name" value="NADH_UbQ_OxRdtase_chain4L/K"/>
</dbReference>
<dbReference type="InterPro" id="IPR039428">
    <property type="entry name" value="NUOK/Mnh_C1-like"/>
</dbReference>
<dbReference type="NCBIfam" id="NF004320">
    <property type="entry name" value="PRK05715.1-2"/>
    <property type="match status" value="1"/>
</dbReference>
<dbReference type="NCBIfam" id="NF004321">
    <property type="entry name" value="PRK05715.1-3"/>
    <property type="match status" value="1"/>
</dbReference>
<dbReference type="NCBIfam" id="NF004323">
    <property type="entry name" value="PRK05715.1-5"/>
    <property type="match status" value="1"/>
</dbReference>
<dbReference type="PANTHER" id="PTHR11434:SF21">
    <property type="entry name" value="NADH DEHYDROGENASE SUBUNIT 4L-RELATED"/>
    <property type="match status" value="1"/>
</dbReference>
<dbReference type="PANTHER" id="PTHR11434">
    <property type="entry name" value="NADH-UBIQUINONE OXIDOREDUCTASE SUBUNIT ND4L"/>
    <property type="match status" value="1"/>
</dbReference>
<dbReference type="Pfam" id="PF00420">
    <property type="entry name" value="Oxidored_q2"/>
    <property type="match status" value="1"/>
</dbReference>
<accession>A4WU21</accession>
<feature type="chain" id="PRO_0000390200" description="NADH-quinone oxidoreductase subunit K">
    <location>
        <begin position="1"/>
        <end position="101"/>
    </location>
</feature>
<feature type="transmembrane region" description="Helical" evidence="1">
    <location>
        <begin position="4"/>
        <end position="24"/>
    </location>
</feature>
<feature type="transmembrane region" description="Helical" evidence="1">
    <location>
        <begin position="30"/>
        <end position="50"/>
    </location>
</feature>
<feature type="transmembrane region" description="Helical" evidence="1">
    <location>
        <begin position="65"/>
        <end position="85"/>
    </location>
</feature>
<name>NUOK_CERS5</name>
<gene>
    <name evidence="1" type="primary">nuoK</name>
    <name type="ordered locus">Rsph17025_1994</name>
</gene>
<keyword id="KW-0997">Cell inner membrane</keyword>
<keyword id="KW-1003">Cell membrane</keyword>
<keyword id="KW-0472">Membrane</keyword>
<keyword id="KW-0520">NAD</keyword>
<keyword id="KW-0874">Quinone</keyword>
<keyword id="KW-1278">Translocase</keyword>
<keyword id="KW-0812">Transmembrane</keyword>
<keyword id="KW-1133">Transmembrane helix</keyword>
<keyword id="KW-0813">Transport</keyword>
<keyword id="KW-0830">Ubiquinone</keyword>
<protein>
    <recommendedName>
        <fullName evidence="1">NADH-quinone oxidoreductase subunit K</fullName>
        <ecNumber evidence="1">7.1.1.-</ecNumber>
    </recommendedName>
    <alternativeName>
        <fullName evidence="1">NADH dehydrogenase I subunit K</fullName>
    </alternativeName>
    <alternativeName>
        <fullName evidence="1">NDH-1 subunit K</fullName>
    </alternativeName>
</protein>
<proteinExistence type="inferred from homology"/>
<reference key="1">
    <citation type="submission" date="2007-04" db="EMBL/GenBank/DDBJ databases">
        <title>Complete sequence of chromosome of Rhodobacter sphaeroides ATCC 17025.</title>
        <authorList>
            <consortium name="US DOE Joint Genome Institute"/>
            <person name="Copeland A."/>
            <person name="Lucas S."/>
            <person name="Lapidus A."/>
            <person name="Barry K."/>
            <person name="Detter J.C."/>
            <person name="Glavina del Rio T."/>
            <person name="Hammon N."/>
            <person name="Israni S."/>
            <person name="Dalin E."/>
            <person name="Tice H."/>
            <person name="Pitluck S."/>
            <person name="Chertkov O."/>
            <person name="Brettin T."/>
            <person name="Bruce D."/>
            <person name="Han C."/>
            <person name="Schmutz J."/>
            <person name="Larimer F."/>
            <person name="Land M."/>
            <person name="Hauser L."/>
            <person name="Kyrpides N."/>
            <person name="Kim E."/>
            <person name="Richardson P."/>
            <person name="Mackenzie C."/>
            <person name="Choudhary M."/>
            <person name="Donohue T.J."/>
            <person name="Kaplan S."/>
        </authorList>
    </citation>
    <scope>NUCLEOTIDE SEQUENCE [LARGE SCALE GENOMIC DNA]</scope>
    <source>
        <strain>ATCC 17025 / ATH 2.4.3</strain>
    </source>
</reference>
<evidence type="ECO:0000255" key="1">
    <source>
        <dbReference type="HAMAP-Rule" id="MF_01456"/>
    </source>
</evidence>